<feature type="peptide" id="PRO_0000016121" description="Relaxin B chain">
    <location>
        <begin position="1"/>
        <end position="20"/>
    </location>
</feature>
<feature type="peptide" id="PRO_0000016122" description="Relaxin A chain">
    <location>
        <begin position="21"/>
        <end position="44"/>
    </location>
</feature>
<feature type="modified residue" description="Pyrrolidone carboxylic acid" evidence="2">
    <location>
        <position position="1"/>
    </location>
</feature>
<feature type="disulfide bond" description="Interchain (between B and A chains)" evidence="1">
    <location>
        <begin position="3"/>
        <end position="31"/>
    </location>
</feature>
<feature type="disulfide bond" description="Interchain (between B and A chains)" evidence="1">
    <location>
        <begin position="15"/>
        <end position="44"/>
    </location>
</feature>
<feature type="disulfide bond" evidence="1">
    <location>
        <begin position="30"/>
        <end position="35"/>
    </location>
</feature>
<feature type="non-consecutive residues" evidence="3">
    <location>
        <begin position="1"/>
        <end position="2"/>
    </location>
</feature>
<feature type="non-consecutive residues" evidence="3">
    <location>
        <begin position="20"/>
        <end position="21"/>
    </location>
</feature>
<reference key="1">
    <citation type="journal article" date="1981" name="FEBS Lett.">
        <title>On the primary and tertiary structure of relaxin from the sand tiger shark (Odontaspis taurus).</title>
        <authorList>
            <person name="Gowan L.K."/>
            <person name="Reinig J.W."/>
            <person name="Schwabe C."/>
            <person name="Bedarkar S."/>
            <person name="Blundell T.L."/>
        </authorList>
    </citation>
    <scope>PROTEIN SEQUENCE</scope>
</reference>
<reference key="2">
    <citation type="journal article" date="1986" name="Eur. J. Biochem.">
        <title>Isolation, purification, and the sequence of relaxin from spiny dogfish (Squalus acanthias).</title>
        <authorList>
            <person name="Bullesbach E.E."/>
            <person name="Gowan L.K."/>
            <person name="Schwabe C."/>
            <person name="Steinetz B.G."/>
            <person name="O'Byrne E."/>
            <person name="Callard I.P."/>
        </authorList>
    </citation>
    <scope>SEQUENCE REVISION TO 20</scope>
    <scope>PYROGLUTAMATE FORMATION AT GLN-1</scope>
</reference>
<dbReference type="PIR" id="A01616">
    <property type="entry name" value="RXRKOT"/>
</dbReference>
<dbReference type="SMR" id="P01349"/>
<dbReference type="GO" id="GO:0005576">
    <property type="term" value="C:extracellular region"/>
    <property type="evidence" value="ECO:0007669"/>
    <property type="project" value="UniProtKB-SubCell"/>
</dbReference>
<dbReference type="GO" id="GO:0001664">
    <property type="term" value="F:G protein-coupled receptor binding"/>
    <property type="evidence" value="ECO:0007669"/>
    <property type="project" value="TreeGrafter"/>
</dbReference>
<dbReference type="GO" id="GO:0005179">
    <property type="term" value="F:hormone activity"/>
    <property type="evidence" value="ECO:0007669"/>
    <property type="project" value="UniProtKB-KW"/>
</dbReference>
<dbReference type="CDD" id="cd04365">
    <property type="entry name" value="IlGF_relaxin_like"/>
    <property type="match status" value="1"/>
</dbReference>
<dbReference type="InterPro" id="IPR016179">
    <property type="entry name" value="Insulin-like"/>
</dbReference>
<dbReference type="InterPro" id="IPR051777">
    <property type="entry name" value="Insulin-like_neuro_ligands"/>
</dbReference>
<dbReference type="InterPro" id="IPR036438">
    <property type="entry name" value="Insulin-like_sf"/>
</dbReference>
<dbReference type="InterPro" id="IPR022353">
    <property type="entry name" value="Insulin_CS"/>
</dbReference>
<dbReference type="InterPro" id="IPR003235">
    <property type="entry name" value="Nem_insulin-like_b-type"/>
</dbReference>
<dbReference type="PANTHER" id="PTHR20968">
    <property type="entry name" value="ILGF DOMAIN-CONTAINING PROTEIN"/>
    <property type="match status" value="1"/>
</dbReference>
<dbReference type="Pfam" id="PF03488">
    <property type="entry name" value="Ins_beta"/>
    <property type="match status" value="1"/>
</dbReference>
<dbReference type="SMART" id="SM00078">
    <property type="entry name" value="IlGF"/>
    <property type="match status" value="1"/>
</dbReference>
<dbReference type="SUPFAM" id="SSF56994">
    <property type="entry name" value="Insulin-like"/>
    <property type="match status" value="1"/>
</dbReference>
<dbReference type="PROSITE" id="PS00262">
    <property type="entry name" value="INSULIN"/>
    <property type="match status" value="1"/>
</dbReference>
<proteinExistence type="evidence at protein level"/>
<accession>P01349</accession>
<evidence type="ECO:0000250" key="1"/>
<evidence type="ECO:0000269" key="2">
    <source>
    </source>
</evidence>
<evidence type="ECO:0000305" key="3"/>
<name>RELX_CARTA</name>
<organism>
    <name type="scientific">Carcharias taurus</name>
    <name type="common">Sand tiger shark</name>
    <name type="synonym">Eugomphodus taurus</name>
    <dbReference type="NCBI Taxonomy" id="30501"/>
    <lineage>
        <taxon>Eukaryota</taxon>
        <taxon>Metazoa</taxon>
        <taxon>Chordata</taxon>
        <taxon>Craniata</taxon>
        <taxon>Vertebrata</taxon>
        <taxon>Chondrichthyes</taxon>
        <taxon>Elasmobranchii</taxon>
        <taxon>Galeomorphii</taxon>
        <taxon>Galeoidea</taxon>
        <taxon>Lamniformes</taxon>
        <taxon>Odontaspididae</taxon>
        <taxon>Carcharias</taxon>
    </lineage>
</organism>
<keyword id="KW-0903">Direct protein sequencing</keyword>
<keyword id="KW-1015">Disulfide bond</keyword>
<keyword id="KW-0372">Hormone</keyword>
<keyword id="KW-0873">Pyrrolidone carboxylic acid</keyword>
<keyword id="KW-0964">Secreted</keyword>
<comment type="subunit">
    <text>Heterodimer of a B chain and an A chain linked by two disulfide bonds.</text>
</comment>
<comment type="subcellular location">
    <subcellularLocation>
        <location>Secreted</location>
    </subcellularLocation>
</comment>
<comment type="similarity">
    <text evidence="3">Belongs to the insulin family.</text>
</comment>
<sequence length="44" mass="4730">QLCGRGFIRAIIFACGGSRWATSPAMSIKCCIYGCTKKDISVLC</sequence>
<protein>
    <recommendedName>
        <fullName>Relaxin</fullName>
    </recommendedName>
    <component>
        <recommendedName>
            <fullName>Relaxin B chain</fullName>
        </recommendedName>
    </component>
    <component>
        <recommendedName>
            <fullName>Relaxin A chain</fullName>
        </recommendedName>
    </component>
</protein>